<protein>
    <recommendedName>
        <fullName evidence="1">Ribosomal RNA large subunit methyltransferase H</fullName>
        <ecNumber evidence="1">2.1.1.177</ecNumber>
    </recommendedName>
    <alternativeName>
        <fullName evidence="1">23S rRNA (pseudouridine1915-N3)-methyltransferase</fullName>
    </alternativeName>
    <alternativeName>
        <fullName evidence="1">23S rRNA m3Psi1915 methyltransferase</fullName>
    </alternativeName>
    <alternativeName>
        <fullName evidence="1">rRNA (pseudouridine-N3-)-methyltransferase RlmH</fullName>
    </alternativeName>
</protein>
<reference key="1">
    <citation type="journal article" date="2004" name="Proc. Natl. Acad. Sci. U.S.A.">
        <title>Genomic plasticity of the causative agent of melioidosis, Burkholderia pseudomallei.</title>
        <authorList>
            <person name="Holden M.T.G."/>
            <person name="Titball R.W."/>
            <person name="Peacock S.J."/>
            <person name="Cerdeno-Tarraga A.-M."/>
            <person name="Atkins T."/>
            <person name="Crossman L.C."/>
            <person name="Pitt T."/>
            <person name="Churcher C."/>
            <person name="Mungall K.L."/>
            <person name="Bentley S.D."/>
            <person name="Sebaihia M."/>
            <person name="Thomson N.R."/>
            <person name="Bason N."/>
            <person name="Beacham I.R."/>
            <person name="Brooks K."/>
            <person name="Brown K.A."/>
            <person name="Brown N.F."/>
            <person name="Challis G.L."/>
            <person name="Cherevach I."/>
            <person name="Chillingworth T."/>
            <person name="Cronin A."/>
            <person name="Crossett B."/>
            <person name="Davis P."/>
            <person name="DeShazer D."/>
            <person name="Feltwell T."/>
            <person name="Fraser A."/>
            <person name="Hance Z."/>
            <person name="Hauser H."/>
            <person name="Holroyd S."/>
            <person name="Jagels K."/>
            <person name="Keith K.E."/>
            <person name="Maddison M."/>
            <person name="Moule S."/>
            <person name="Price C."/>
            <person name="Quail M.A."/>
            <person name="Rabbinowitsch E."/>
            <person name="Rutherford K."/>
            <person name="Sanders M."/>
            <person name="Simmonds M."/>
            <person name="Songsivilai S."/>
            <person name="Stevens K."/>
            <person name="Tumapa S."/>
            <person name="Vesaratchavest M."/>
            <person name="Whitehead S."/>
            <person name="Yeats C."/>
            <person name="Barrell B.G."/>
            <person name="Oyston P.C.F."/>
            <person name="Parkhill J."/>
        </authorList>
    </citation>
    <scope>NUCLEOTIDE SEQUENCE [LARGE SCALE GENOMIC DNA]</scope>
    <source>
        <strain>K96243</strain>
    </source>
</reference>
<gene>
    <name evidence="1" type="primary">rlmH</name>
    <name type="ordered locus">BPSL1160</name>
</gene>
<dbReference type="EC" id="2.1.1.177" evidence="1"/>
<dbReference type="EMBL" id="BX571965">
    <property type="protein sequence ID" value="CAH35155.1"/>
    <property type="molecule type" value="Genomic_DNA"/>
</dbReference>
<dbReference type="RefSeq" id="WP_004186098.1">
    <property type="nucleotide sequence ID" value="NZ_CP009538.1"/>
</dbReference>
<dbReference type="RefSeq" id="YP_107782.1">
    <property type="nucleotide sequence ID" value="NC_006350.1"/>
</dbReference>
<dbReference type="SMR" id="Q63VT4"/>
<dbReference type="STRING" id="272560.BPSL1160"/>
<dbReference type="GeneID" id="93059640"/>
<dbReference type="KEGG" id="bps:BPSL1160"/>
<dbReference type="PATRIC" id="fig|272560.51.peg.378"/>
<dbReference type="eggNOG" id="COG1576">
    <property type="taxonomic scope" value="Bacteria"/>
</dbReference>
<dbReference type="Proteomes" id="UP000000605">
    <property type="component" value="Chromosome 1"/>
</dbReference>
<dbReference type="GO" id="GO:0005737">
    <property type="term" value="C:cytoplasm"/>
    <property type="evidence" value="ECO:0007669"/>
    <property type="project" value="UniProtKB-SubCell"/>
</dbReference>
<dbReference type="GO" id="GO:0070038">
    <property type="term" value="F:rRNA (pseudouridine-N3-)-methyltransferase activity"/>
    <property type="evidence" value="ECO:0007669"/>
    <property type="project" value="UniProtKB-UniRule"/>
</dbReference>
<dbReference type="CDD" id="cd18081">
    <property type="entry name" value="RlmH-like"/>
    <property type="match status" value="1"/>
</dbReference>
<dbReference type="Gene3D" id="3.40.1280.10">
    <property type="match status" value="1"/>
</dbReference>
<dbReference type="HAMAP" id="MF_00658">
    <property type="entry name" value="23SrRNA_methyltr_H"/>
    <property type="match status" value="1"/>
</dbReference>
<dbReference type="InterPro" id="IPR029028">
    <property type="entry name" value="Alpha/beta_knot_MTases"/>
</dbReference>
<dbReference type="InterPro" id="IPR003742">
    <property type="entry name" value="RlmH-like"/>
</dbReference>
<dbReference type="InterPro" id="IPR029026">
    <property type="entry name" value="tRNA_m1G_MTases_N"/>
</dbReference>
<dbReference type="NCBIfam" id="NF000986">
    <property type="entry name" value="PRK00103.1-4"/>
    <property type="match status" value="1"/>
</dbReference>
<dbReference type="NCBIfam" id="TIGR00246">
    <property type="entry name" value="tRNA_RlmH_YbeA"/>
    <property type="match status" value="1"/>
</dbReference>
<dbReference type="PANTHER" id="PTHR33603">
    <property type="entry name" value="METHYLTRANSFERASE"/>
    <property type="match status" value="1"/>
</dbReference>
<dbReference type="PANTHER" id="PTHR33603:SF1">
    <property type="entry name" value="RIBOSOMAL RNA LARGE SUBUNIT METHYLTRANSFERASE H"/>
    <property type="match status" value="1"/>
</dbReference>
<dbReference type="Pfam" id="PF02590">
    <property type="entry name" value="SPOUT_MTase"/>
    <property type="match status" value="1"/>
</dbReference>
<dbReference type="PIRSF" id="PIRSF004505">
    <property type="entry name" value="MT_bac"/>
    <property type="match status" value="1"/>
</dbReference>
<dbReference type="SUPFAM" id="SSF75217">
    <property type="entry name" value="alpha/beta knot"/>
    <property type="match status" value="1"/>
</dbReference>
<evidence type="ECO:0000255" key="1">
    <source>
        <dbReference type="HAMAP-Rule" id="MF_00658"/>
    </source>
</evidence>
<sequence length="156" mass="17427">MKLHIVAVGHKMPGWIASGFDEYAKRMPPELRIELREVKPELRSGSRTADSVMAAEQQRIEAALPKNARVVALDERGRDWTTMQLAQALPAWQQDGRDVAFVIGGADGLAPALKSRAELLLRVSSLTLPHGMVRVLLAEQLYRAWSITQNHPYHRA</sequence>
<accession>Q63VT4</accession>
<feature type="chain" id="PRO_0000198099" description="Ribosomal RNA large subunit methyltransferase H">
    <location>
        <begin position="1"/>
        <end position="156"/>
    </location>
</feature>
<feature type="binding site" evidence="1">
    <location>
        <position position="73"/>
    </location>
    <ligand>
        <name>S-adenosyl-L-methionine</name>
        <dbReference type="ChEBI" id="CHEBI:59789"/>
    </ligand>
</feature>
<feature type="binding site" evidence="1">
    <location>
        <position position="104"/>
    </location>
    <ligand>
        <name>S-adenosyl-L-methionine</name>
        <dbReference type="ChEBI" id="CHEBI:59789"/>
    </ligand>
</feature>
<feature type="binding site" evidence="1">
    <location>
        <begin position="123"/>
        <end position="128"/>
    </location>
    <ligand>
        <name>S-adenosyl-L-methionine</name>
        <dbReference type="ChEBI" id="CHEBI:59789"/>
    </ligand>
</feature>
<organism>
    <name type="scientific">Burkholderia pseudomallei (strain K96243)</name>
    <dbReference type="NCBI Taxonomy" id="272560"/>
    <lineage>
        <taxon>Bacteria</taxon>
        <taxon>Pseudomonadati</taxon>
        <taxon>Pseudomonadota</taxon>
        <taxon>Betaproteobacteria</taxon>
        <taxon>Burkholderiales</taxon>
        <taxon>Burkholderiaceae</taxon>
        <taxon>Burkholderia</taxon>
        <taxon>pseudomallei group</taxon>
    </lineage>
</organism>
<keyword id="KW-0963">Cytoplasm</keyword>
<keyword id="KW-0489">Methyltransferase</keyword>
<keyword id="KW-1185">Reference proteome</keyword>
<keyword id="KW-0698">rRNA processing</keyword>
<keyword id="KW-0949">S-adenosyl-L-methionine</keyword>
<keyword id="KW-0808">Transferase</keyword>
<name>RLMH_BURPS</name>
<comment type="function">
    <text evidence="1">Specifically methylates the pseudouridine at position 1915 (m3Psi1915) in 23S rRNA.</text>
</comment>
<comment type="catalytic activity">
    <reaction evidence="1">
        <text>pseudouridine(1915) in 23S rRNA + S-adenosyl-L-methionine = N(3)-methylpseudouridine(1915) in 23S rRNA + S-adenosyl-L-homocysteine + H(+)</text>
        <dbReference type="Rhea" id="RHEA:42752"/>
        <dbReference type="Rhea" id="RHEA-COMP:10221"/>
        <dbReference type="Rhea" id="RHEA-COMP:10222"/>
        <dbReference type="ChEBI" id="CHEBI:15378"/>
        <dbReference type="ChEBI" id="CHEBI:57856"/>
        <dbReference type="ChEBI" id="CHEBI:59789"/>
        <dbReference type="ChEBI" id="CHEBI:65314"/>
        <dbReference type="ChEBI" id="CHEBI:74486"/>
        <dbReference type="EC" id="2.1.1.177"/>
    </reaction>
</comment>
<comment type="subunit">
    <text evidence="1">Homodimer.</text>
</comment>
<comment type="subcellular location">
    <subcellularLocation>
        <location evidence="1">Cytoplasm</location>
    </subcellularLocation>
</comment>
<comment type="similarity">
    <text evidence="1">Belongs to the RNA methyltransferase RlmH family.</text>
</comment>
<proteinExistence type="inferred from homology"/>